<proteinExistence type="inferred from homology"/>
<organism>
    <name type="scientific">Ruthia magnifica subsp. Calyptogena magnifica</name>
    <dbReference type="NCBI Taxonomy" id="413404"/>
    <lineage>
        <taxon>Bacteria</taxon>
        <taxon>Pseudomonadati</taxon>
        <taxon>Pseudomonadota</taxon>
        <taxon>Gammaproteobacteria</taxon>
        <taxon>Candidatus Pseudothioglobaceae</taxon>
        <taxon>Candidatus Ruthturnera</taxon>
    </lineage>
</organism>
<reference key="1">
    <citation type="journal article" date="2007" name="Science">
        <title>The Calyptogena magnifica chemoautotrophic symbiont genome.</title>
        <authorList>
            <person name="Newton I.L.G."/>
            <person name="Woyke T."/>
            <person name="Auchtung T.A."/>
            <person name="Dilly G.F."/>
            <person name="Dutton R.J."/>
            <person name="Fisher M.C."/>
            <person name="Fontanez K.M."/>
            <person name="Lau E."/>
            <person name="Stewart F.J."/>
            <person name="Richardson P.M."/>
            <person name="Barry K.W."/>
            <person name="Saunders E."/>
            <person name="Detter J.C."/>
            <person name="Wu D."/>
            <person name="Eisen J.A."/>
            <person name="Cavanaugh C.M."/>
        </authorList>
    </citation>
    <scope>NUCLEOTIDE SEQUENCE [LARGE SCALE GENOMIC DNA]</scope>
</reference>
<gene>
    <name evidence="1" type="primary">cmoA</name>
    <name type="ordered locus">Rmag_0930</name>
</gene>
<dbReference type="EC" id="2.1.3.-" evidence="1"/>
<dbReference type="EMBL" id="CP000488">
    <property type="protein sequence ID" value="ABL02643.1"/>
    <property type="molecule type" value="Genomic_DNA"/>
</dbReference>
<dbReference type="RefSeq" id="WP_011738268.1">
    <property type="nucleotide sequence ID" value="NC_008610.1"/>
</dbReference>
<dbReference type="SMR" id="A1AXI6"/>
<dbReference type="STRING" id="413404.Rmag_0930"/>
<dbReference type="KEGG" id="rma:Rmag_0930"/>
<dbReference type="eggNOG" id="COG2226">
    <property type="taxonomic scope" value="Bacteria"/>
</dbReference>
<dbReference type="HOGENOM" id="CLU_078475_0_0_6"/>
<dbReference type="OrthoDB" id="9779941at2"/>
<dbReference type="Proteomes" id="UP000002587">
    <property type="component" value="Chromosome"/>
</dbReference>
<dbReference type="GO" id="GO:0016743">
    <property type="term" value="F:carboxyl- or carbamoyltransferase activity"/>
    <property type="evidence" value="ECO:0007669"/>
    <property type="project" value="UniProtKB-UniRule"/>
</dbReference>
<dbReference type="GO" id="GO:1904047">
    <property type="term" value="F:S-adenosyl-L-methionine binding"/>
    <property type="evidence" value="ECO:0007669"/>
    <property type="project" value="UniProtKB-UniRule"/>
</dbReference>
<dbReference type="GO" id="GO:0002098">
    <property type="term" value="P:tRNA wobble uridine modification"/>
    <property type="evidence" value="ECO:0007669"/>
    <property type="project" value="InterPro"/>
</dbReference>
<dbReference type="CDD" id="cd02440">
    <property type="entry name" value="AdoMet_MTases"/>
    <property type="match status" value="1"/>
</dbReference>
<dbReference type="Gene3D" id="3.40.50.150">
    <property type="entry name" value="Vaccinia Virus protein VP39"/>
    <property type="match status" value="1"/>
</dbReference>
<dbReference type="HAMAP" id="MF_01589">
    <property type="entry name" value="Cx_SAM_synthase"/>
    <property type="match status" value="1"/>
</dbReference>
<dbReference type="InterPro" id="IPR005271">
    <property type="entry name" value="CmoA"/>
</dbReference>
<dbReference type="InterPro" id="IPR025714">
    <property type="entry name" value="Methyltranfer_dom"/>
</dbReference>
<dbReference type="InterPro" id="IPR029063">
    <property type="entry name" value="SAM-dependent_MTases_sf"/>
</dbReference>
<dbReference type="NCBIfam" id="TIGR00740">
    <property type="entry name" value="carboxy-S-adenosyl-L-methionine synthase CmoA"/>
    <property type="match status" value="1"/>
</dbReference>
<dbReference type="PANTHER" id="PTHR43861:SF2">
    <property type="entry name" value="CARBOXY-S-ADENOSYL-L-METHIONINE SYNTHASE"/>
    <property type="match status" value="1"/>
</dbReference>
<dbReference type="PANTHER" id="PTHR43861">
    <property type="entry name" value="TRANS-ACONITATE 2-METHYLTRANSFERASE-RELATED"/>
    <property type="match status" value="1"/>
</dbReference>
<dbReference type="Pfam" id="PF13847">
    <property type="entry name" value="Methyltransf_31"/>
    <property type="match status" value="1"/>
</dbReference>
<dbReference type="PIRSF" id="PIRSF006325">
    <property type="entry name" value="MeTrfase_bac"/>
    <property type="match status" value="1"/>
</dbReference>
<dbReference type="SUPFAM" id="SSF53335">
    <property type="entry name" value="S-adenosyl-L-methionine-dependent methyltransferases"/>
    <property type="match status" value="1"/>
</dbReference>
<evidence type="ECO:0000255" key="1">
    <source>
        <dbReference type="HAMAP-Rule" id="MF_01589"/>
    </source>
</evidence>
<comment type="function">
    <text evidence="1">Catalyzes the conversion of S-adenosyl-L-methionine (SAM) to carboxy-S-adenosyl-L-methionine (Cx-SAM).</text>
</comment>
<comment type="catalytic activity">
    <reaction evidence="1">
        <text>prephenate + S-adenosyl-L-methionine = carboxy-S-adenosyl-L-methionine + 3-phenylpyruvate + H2O</text>
        <dbReference type="Rhea" id="RHEA:51692"/>
        <dbReference type="ChEBI" id="CHEBI:15377"/>
        <dbReference type="ChEBI" id="CHEBI:18005"/>
        <dbReference type="ChEBI" id="CHEBI:29934"/>
        <dbReference type="ChEBI" id="CHEBI:59789"/>
        <dbReference type="ChEBI" id="CHEBI:134278"/>
    </reaction>
</comment>
<comment type="subunit">
    <text evidence="1">Homodimer.</text>
</comment>
<comment type="similarity">
    <text evidence="1">Belongs to the class I-like SAM-binding methyltransferase superfamily. Cx-SAM synthase family.</text>
</comment>
<sequence length="237" mass="26822">MRDNIFTKENDLVNFAFDSQVANVFDDMVKRSVPAYQSMIEMISLSVKTYGQDNTNYYDLGASTGATSIALGINNPHSNNQIIALDNSPDMVKKCQQNLAGKIDNVDVICGDILDMKFENASIIVLNLTLQFIAPNNRQALINRIYKDLNTNGALIISEKIHFNDQQKQKQIAKLHLNFKRANGYSELEITNKRQSIENVLITDSKQTHFKRFNMAGFKNSICHFQCLNFVSFLAVK</sequence>
<feature type="chain" id="PRO_0000314369" description="Carboxy-S-adenosyl-L-methionine synthase">
    <location>
        <begin position="1"/>
        <end position="237"/>
    </location>
</feature>
<feature type="binding site" evidence="1">
    <location>
        <position position="36"/>
    </location>
    <ligand>
        <name>S-adenosyl-L-methionine</name>
        <dbReference type="ChEBI" id="CHEBI:59789"/>
    </ligand>
</feature>
<feature type="binding site" evidence="1">
    <location>
        <begin position="61"/>
        <end position="63"/>
    </location>
    <ligand>
        <name>S-adenosyl-L-methionine</name>
        <dbReference type="ChEBI" id="CHEBI:59789"/>
    </ligand>
</feature>
<feature type="binding site" evidence="1">
    <location>
        <begin position="86"/>
        <end position="87"/>
    </location>
    <ligand>
        <name>S-adenosyl-L-methionine</name>
        <dbReference type="ChEBI" id="CHEBI:59789"/>
    </ligand>
</feature>
<feature type="binding site" evidence="1">
    <location>
        <begin position="112"/>
        <end position="113"/>
    </location>
    <ligand>
        <name>S-adenosyl-L-methionine</name>
        <dbReference type="ChEBI" id="CHEBI:59789"/>
    </ligand>
</feature>
<feature type="binding site" evidence="1">
    <location>
        <position position="127"/>
    </location>
    <ligand>
        <name>S-adenosyl-L-methionine</name>
        <dbReference type="ChEBI" id="CHEBI:59789"/>
    </ligand>
</feature>
<feature type="binding site" evidence="1">
    <location>
        <position position="194"/>
    </location>
    <ligand>
        <name>S-adenosyl-L-methionine</name>
        <dbReference type="ChEBI" id="CHEBI:59789"/>
    </ligand>
</feature>
<keyword id="KW-0949">S-adenosyl-L-methionine</keyword>
<keyword id="KW-0808">Transferase</keyword>
<accession>A1AXI6</accession>
<protein>
    <recommendedName>
        <fullName evidence="1">Carboxy-S-adenosyl-L-methionine synthase</fullName>
        <shortName evidence="1">Cx-SAM synthase</shortName>
        <ecNumber evidence="1">2.1.3.-</ecNumber>
    </recommendedName>
</protein>
<name>CMOA_RUTMC</name>